<evidence type="ECO:0000255" key="1">
    <source>
        <dbReference type="HAMAP-Rule" id="MF_01818"/>
    </source>
</evidence>
<proteinExistence type="inferred from homology"/>
<dbReference type="EC" id="3.1.26.11" evidence="1"/>
<dbReference type="EMBL" id="CR936503">
    <property type="protein sequence ID" value="CAI55345.1"/>
    <property type="molecule type" value="Genomic_DNA"/>
</dbReference>
<dbReference type="RefSeq" id="WP_011374744.1">
    <property type="nucleotide sequence ID" value="NC_007576.1"/>
</dbReference>
<dbReference type="SMR" id="Q38WT6"/>
<dbReference type="STRING" id="314315.LCA_1043"/>
<dbReference type="GeneID" id="57133901"/>
<dbReference type="KEGG" id="lsa:LCA_1043"/>
<dbReference type="eggNOG" id="COG1234">
    <property type="taxonomic scope" value="Bacteria"/>
</dbReference>
<dbReference type="HOGENOM" id="CLU_031317_2_0_9"/>
<dbReference type="OrthoDB" id="9800940at2"/>
<dbReference type="Proteomes" id="UP000002707">
    <property type="component" value="Chromosome"/>
</dbReference>
<dbReference type="GO" id="GO:0042781">
    <property type="term" value="F:3'-tRNA processing endoribonuclease activity"/>
    <property type="evidence" value="ECO:0007669"/>
    <property type="project" value="UniProtKB-UniRule"/>
</dbReference>
<dbReference type="GO" id="GO:0008270">
    <property type="term" value="F:zinc ion binding"/>
    <property type="evidence" value="ECO:0007669"/>
    <property type="project" value="UniProtKB-UniRule"/>
</dbReference>
<dbReference type="CDD" id="cd07717">
    <property type="entry name" value="RNaseZ_ZiPD-like_MBL-fold"/>
    <property type="match status" value="1"/>
</dbReference>
<dbReference type="FunFam" id="3.60.15.10:FF:000002">
    <property type="entry name" value="Ribonuclease Z"/>
    <property type="match status" value="1"/>
</dbReference>
<dbReference type="Gene3D" id="3.60.15.10">
    <property type="entry name" value="Ribonuclease Z/Hydroxyacylglutathione hydrolase-like"/>
    <property type="match status" value="1"/>
</dbReference>
<dbReference type="HAMAP" id="MF_01818">
    <property type="entry name" value="RNase_Z_BN"/>
    <property type="match status" value="1"/>
</dbReference>
<dbReference type="InterPro" id="IPR001279">
    <property type="entry name" value="Metallo-B-lactamas"/>
</dbReference>
<dbReference type="InterPro" id="IPR036866">
    <property type="entry name" value="RibonucZ/Hydroxyglut_hydro"/>
</dbReference>
<dbReference type="InterPro" id="IPR013471">
    <property type="entry name" value="RNase_Z/BN"/>
</dbReference>
<dbReference type="NCBIfam" id="NF000801">
    <property type="entry name" value="PRK00055.1-3"/>
    <property type="match status" value="1"/>
</dbReference>
<dbReference type="NCBIfam" id="TIGR02651">
    <property type="entry name" value="RNase_Z"/>
    <property type="match status" value="1"/>
</dbReference>
<dbReference type="PANTHER" id="PTHR46018">
    <property type="entry name" value="ZINC PHOSPHODIESTERASE ELAC PROTEIN 1"/>
    <property type="match status" value="1"/>
</dbReference>
<dbReference type="PANTHER" id="PTHR46018:SF2">
    <property type="entry name" value="ZINC PHOSPHODIESTERASE ELAC PROTEIN 1"/>
    <property type="match status" value="1"/>
</dbReference>
<dbReference type="Pfam" id="PF00753">
    <property type="entry name" value="Lactamase_B"/>
    <property type="match status" value="1"/>
</dbReference>
<dbReference type="SUPFAM" id="SSF56281">
    <property type="entry name" value="Metallo-hydrolase/oxidoreductase"/>
    <property type="match status" value="1"/>
</dbReference>
<protein>
    <recommendedName>
        <fullName evidence="1">Ribonuclease Z</fullName>
        <shortName evidence="1">RNase Z</shortName>
        <ecNumber evidence="1">3.1.26.11</ecNumber>
    </recommendedName>
    <alternativeName>
        <fullName evidence="1">tRNA 3 endonuclease</fullName>
    </alternativeName>
    <alternativeName>
        <fullName evidence="1">tRNase Z</fullName>
    </alternativeName>
</protein>
<gene>
    <name evidence="1" type="primary">rnz</name>
    <name type="ordered locus">LCA_1043</name>
</gene>
<organism>
    <name type="scientific">Latilactobacillus sakei subsp. sakei (strain 23K)</name>
    <name type="common">Lactobacillus sakei subsp. sakei</name>
    <dbReference type="NCBI Taxonomy" id="314315"/>
    <lineage>
        <taxon>Bacteria</taxon>
        <taxon>Bacillati</taxon>
        <taxon>Bacillota</taxon>
        <taxon>Bacilli</taxon>
        <taxon>Lactobacillales</taxon>
        <taxon>Lactobacillaceae</taxon>
        <taxon>Latilactobacillus</taxon>
    </lineage>
</organism>
<accession>Q38WT6</accession>
<keyword id="KW-0255">Endonuclease</keyword>
<keyword id="KW-0378">Hydrolase</keyword>
<keyword id="KW-0479">Metal-binding</keyword>
<keyword id="KW-0540">Nuclease</keyword>
<keyword id="KW-1185">Reference proteome</keyword>
<keyword id="KW-0819">tRNA processing</keyword>
<keyword id="KW-0862">Zinc</keyword>
<reference key="1">
    <citation type="journal article" date="2005" name="Nat. Biotechnol.">
        <title>The complete genome sequence of the meat-borne lactic acid bacterium Lactobacillus sakei 23K.</title>
        <authorList>
            <person name="Chaillou S."/>
            <person name="Champomier-Verges M.-C."/>
            <person name="Cornet M."/>
            <person name="Crutz-Le Coq A.-M."/>
            <person name="Dudez A.-M."/>
            <person name="Martin V."/>
            <person name="Beaufils S."/>
            <person name="Darbon-Rongere E."/>
            <person name="Bossy R."/>
            <person name="Loux V."/>
            <person name="Zagorec M."/>
        </authorList>
    </citation>
    <scope>NUCLEOTIDE SEQUENCE [LARGE SCALE GENOMIC DNA]</scope>
    <source>
        <strain>23K</strain>
    </source>
</reference>
<name>RNZ_LATSS</name>
<feature type="chain" id="PRO_1000070293" description="Ribonuclease Z">
    <location>
        <begin position="1"/>
        <end position="312"/>
    </location>
</feature>
<feature type="active site" description="Proton acceptor" evidence="1">
    <location>
        <position position="67"/>
    </location>
</feature>
<feature type="binding site" evidence="1">
    <location>
        <position position="63"/>
    </location>
    <ligand>
        <name>Zn(2+)</name>
        <dbReference type="ChEBI" id="CHEBI:29105"/>
        <label>1</label>
        <note>catalytic</note>
    </ligand>
</feature>
<feature type="binding site" evidence="1">
    <location>
        <position position="65"/>
    </location>
    <ligand>
        <name>Zn(2+)</name>
        <dbReference type="ChEBI" id="CHEBI:29105"/>
        <label>1</label>
        <note>catalytic</note>
    </ligand>
</feature>
<feature type="binding site" evidence="1">
    <location>
        <position position="67"/>
    </location>
    <ligand>
        <name>Zn(2+)</name>
        <dbReference type="ChEBI" id="CHEBI:29105"/>
        <label>2</label>
        <note>catalytic</note>
    </ligand>
</feature>
<feature type="binding site" evidence="1">
    <location>
        <position position="68"/>
    </location>
    <ligand>
        <name>Zn(2+)</name>
        <dbReference type="ChEBI" id="CHEBI:29105"/>
        <label>2</label>
        <note>catalytic</note>
    </ligand>
</feature>
<feature type="binding site" evidence="1">
    <location>
        <position position="141"/>
    </location>
    <ligand>
        <name>Zn(2+)</name>
        <dbReference type="ChEBI" id="CHEBI:29105"/>
        <label>1</label>
        <note>catalytic</note>
    </ligand>
</feature>
<feature type="binding site" evidence="1">
    <location>
        <position position="212"/>
    </location>
    <ligand>
        <name>Zn(2+)</name>
        <dbReference type="ChEBI" id="CHEBI:29105"/>
        <label>1</label>
        <note>catalytic</note>
    </ligand>
</feature>
<feature type="binding site" evidence="1">
    <location>
        <position position="212"/>
    </location>
    <ligand>
        <name>Zn(2+)</name>
        <dbReference type="ChEBI" id="CHEBI:29105"/>
        <label>2</label>
        <note>catalytic</note>
    </ligand>
</feature>
<feature type="binding site" evidence="1">
    <location>
        <position position="270"/>
    </location>
    <ligand>
        <name>Zn(2+)</name>
        <dbReference type="ChEBI" id="CHEBI:29105"/>
        <label>2</label>
        <note>catalytic</note>
    </ligand>
</feature>
<comment type="function">
    <text evidence="1">Zinc phosphodiesterase, which displays some tRNA 3'-processing endonuclease activity. Probably involved in tRNA maturation, by removing a 3'-trailer from precursor tRNA.</text>
</comment>
<comment type="catalytic activity">
    <reaction evidence="1">
        <text>Endonucleolytic cleavage of RNA, removing extra 3' nucleotides from tRNA precursor, generating 3' termini of tRNAs. A 3'-hydroxy group is left at the tRNA terminus and a 5'-phosphoryl group is left at the trailer molecule.</text>
        <dbReference type="EC" id="3.1.26.11"/>
    </reaction>
</comment>
<comment type="cofactor">
    <cofactor evidence="1">
        <name>Zn(2+)</name>
        <dbReference type="ChEBI" id="CHEBI:29105"/>
    </cofactor>
    <text evidence="1">Binds 2 Zn(2+) ions.</text>
</comment>
<comment type="subunit">
    <text evidence="1">Homodimer.</text>
</comment>
<comment type="similarity">
    <text evidence="1">Belongs to the RNase Z family.</text>
</comment>
<sequence>MELEFLGTGAGVPARQRNVTSIALKLLDERNEVWLFDVGEATQHQILKTTLKPRKVKKIFLTHLHGDHLFGLPGFLSSRSFQGGDEPLTIYGPKGTEEYVRTSLKLSESHLTYALKFVVLPENGVIIDDKTFRVECAKLDHRIASYGFRIVEKDHPGELQVEKLQADGVPSGPVYARIKNGETVTLSDGREIDGRNYIGNAQKGRIVTIIGDTRNCEAITRLAENADVLVHESTFGKQEQKIARQYYHSTNINAAKVAKTAHVKRLLLTHISARYLGQAVRELQNDARDIFKNTRVVSDLDLYDIPFHGRKE</sequence>